<sequence length="465" mass="50353">MAPVSNQAGGHVAVLAFPFSTHAAPLLNIVCRLAAAAPSTLFSFFNTKQSNSSILASDTSVLRYTNVCVCEVADGVPEGYVFVGKPQEDIELFMKAAPDNFRKCLEASVAESGREVSCLVTDAFFWFGAHMADDMGGVPWVPFWTAGPASLSAHVHTDLIRNTTSGDCHDEKETITVIAGMSKVRPQDLPEGIIFGNLESLFSRMLHQMGLMLPLATAVFINSFEELDPVITNDLKSKFKRFLNVGPLDLLEPTASAATTTPQTAEAVAGDGCLSWLDKQKAASVVYVSFGSVTRPSPEELMALAEALEASRVPFLWSLRDNLKNPQLDEFLSKGKLNGMVVPWAPQPQVLAHGSVGAFVTHCGWNSVLESVAGGVPLICRPFFGDQKLNARMVEDVWKIGLRLEGGVFTKNGMLKSLDMLLSQDKGTKMKNKIHTLKQLAQQAVEPKGSSTRNFESLLEMATTN</sequence>
<dbReference type="EC" id="2.4.1.115" evidence="4"/>
<dbReference type="EMBL" id="AY695815">
    <property type="protein sequence ID" value="AAU12366.1"/>
    <property type="molecule type" value="mRNA"/>
</dbReference>
<dbReference type="EMBL" id="AY695816">
    <property type="protein sequence ID" value="AAU12367.1"/>
    <property type="molecule type" value="Genomic_DNA"/>
</dbReference>
<dbReference type="EMBL" id="AY575056">
    <property type="protein sequence ID" value="AAS89832.1"/>
    <property type="molecule type" value="mRNA"/>
</dbReference>
<dbReference type="SMR" id="Q5UL10"/>
<dbReference type="CAZy" id="GT1">
    <property type="family name" value="Glycosyltransferase Family 1"/>
</dbReference>
<dbReference type="UniPathway" id="UPA00009"/>
<dbReference type="GO" id="GO:0047213">
    <property type="term" value="F:anthocyanidin 3-O-glucosyltransferase activity"/>
    <property type="evidence" value="ECO:0007669"/>
    <property type="project" value="UniProtKB-EC"/>
</dbReference>
<dbReference type="GO" id="GO:0080043">
    <property type="term" value="F:quercetin 3-O-glucosyltransferase activity"/>
    <property type="evidence" value="ECO:0007669"/>
    <property type="project" value="TreeGrafter"/>
</dbReference>
<dbReference type="GO" id="GO:0080044">
    <property type="term" value="F:quercetin 7-O-glucosyltransferase activity"/>
    <property type="evidence" value="ECO:0007669"/>
    <property type="project" value="TreeGrafter"/>
</dbReference>
<dbReference type="GO" id="GO:0009718">
    <property type="term" value="P:anthocyanin-containing compound biosynthetic process"/>
    <property type="evidence" value="ECO:0007669"/>
    <property type="project" value="UniProtKB-UniPathway"/>
</dbReference>
<dbReference type="CDD" id="cd03784">
    <property type="entry name" value="GT1_Gtf-like"/>
    <property type="match status" value="1"/>
</dbReference>
<dbReference type="FunFam" id="3.40.50.2000:FF:000091">
    <property type="entry name" value="Glycosyltransferase"/>
    <property type="match status" value="1"/>
</dbReference>
<dbReference type="FunFam" id="3.40.50.2000:FF:000129">
    <property type="entry name" value="Glycosyltransferase"/>
    <property type="match status" value="1"/>
</dbReference>
<dbReference type="Gene3D" id="3.40.50.2000">
    <property type="entry name" value="Glycogen Phosphorylase B"/>
    <property type="match status" value="2"/>
</dbReference>
<dbReference type="InterPro" id="IPR002213">
    <property type="entry name" value="UDP_glucos_trans"/>
</dbReference>
<dbReference type="InterPro" id="IPR035595">
    <property type="entry name" value="UDP_glycos_trans_CS"/>
</dbReference>
<dbReference type="PANTHER" id="PTHR11926">
    <property type="entry name" value="GLUCOSYL/GLUCURONOSYL TRANSFERASES"/>
    <property type="match status" value="1"/>
</dbReference>
<dbReference type="PANTHER" id="PTHR11926:SF1560">
    <property type="entry name" value="UDP-GLYCOSYLTRANSFERASE 74E1-RELATED"/>
    <property type="match status" value="1"/>
</dbReference>
<dbReference type="Pfam" id="PF00201">
    <property type="entry name" value="UDPGT"/>
    <property type="match status" value="1"/>
</dbReference>
<dbReference type="SUPFAM" id="SSF53756">
    <property type="entry name" value="UDP-Glycosyltransferase/glycogen phosphorylase"/>
    <property type="match status" value="1"/>
</dbReference>
<dbReference type="PROSITE" id="PS00375">
    <property type="entry name" value="UDPGT"/>
    <property type="match status" value="1"/>
</dbReference>
<keyword id="KW-0328">Glycosyltransferase</keyword>
<keyword id="KW-0808">Transferase</keyword>
<protein>
    <recommendedName>
        <fullName>Anthocyanidin 3-O-glucosyltransferase 2</fullName>
        <ecNumber evidence="4">2.4.1.115</ecNumber>
    </recommendedName>
    <alternativeName>
        <fullName evidence="7">UDP-glucose flavonoid 3-O-glucosyltransferase 2</fullName>
        <shortName evidence="5">FaFGT</shortName>
    </alternativeName>
</protein>
<name>UFOG2_FRAAN</name>
<evidence type="ECO:0000250" key="1">
    <source>
        <dbReference type="UniProtKB" id="A0A0A1HA03"/>
    </source>
</evidence>
<evidence type="ECO:0000250" key="2">
    <source>
        <dbReference type="UniProtKB" id="P51094"/>
    </source>
</evidence>
<evidence type="ECO:0000255" key="3"/>
<evidence type="ECO:0000269" key="4">
    <source>
    </source>
</evidence>
<evidence type="ECO:0000303" key="5">
    <source>
    </source>
</evidence>
<evidence type="ECO:0000305" key="6"/>
<evidence type="ECO:0000312" key="7">
    <source>
        <dbReference type="EMBL" id="AAS89832.1"/>
    </source>
</evidence>
<evidence type="ECO:0000312" key="8">
    <source>
        <dbReference type="EMBL" id="AAU12367.1"/>
    </source>
</evidence>
<gene>
    <name evidence="8" type="primary">FGT</name>
    <name evidence="7" type="synonym">UFGT</name>
</gene>
<feature type="chain" id="PRO_0000413767" description="Anthocyanidin 3-O-glucosyltransferase 2">
    <location>
        <begin position="1"/>
        <end position="465"/>
    </location>
</feature>
<feature type="active site" description="Proton acceptor" evidence="1">
    <location>
        <position position="22"/>
    </location>
</feature>
<feature type="active site" description="Charge relay" evidence="1">
    <location>
        <position position="122"/>
    </location>
</feature>
<feature type="binding site" evidence="2">
    <location>
        <position position="22"/>
    </location>
    <ligand>
        <name>an anthocyanidin</name>
        <dbReference type="ChEBI" id="CHEBI:143576"/>
    </ligand>
</feature>
<feature type="binding site" evidence="2">
    <location>
        <position position="87"/>
    </location>
    <ligand>
        <name>an anthocyanidin</name>
        <dbReference type="ChEBI" id="CHEBI:143576"/>
    </ligand>
</feature>
<feature type="binding site" evidence="1">
    <location>
        <position position="145"/>
    </location>
    <ligand>
        <name>UDP-alpha-D-glucose</name>
        <dbReference type="ChEBI" id="CHEBI:58885"/>
    </ligand>
</feature>
<feature type="binding site" evidence="2">
    <location>
        <position position="154"/>
    </location>
    <ligand>
        <name>an anthocyanidin</name>
        <dbReference type="ChEBI" id="CHEBI:143576"/>
    </ligand>
</feature>
<feature type="binding site" evidence="1">
    <location>
        <position position="345"/>
    </location>
    <ligand>
        <name>UDP-alpha-D-glucose</name>
        <dbReference type="ChEBI" id="CHEBI:58885"/>
    </ligand>
</feature>
<feature type="binding site" evidence="1">
    <location>
        <position position="347"/>
    </location>
    <ligand>
        <name>UDP-alpha-D-glucose</name>
        <dbReference type="ChEBI" id="CHEBI:58885"/>
    </ligand>
</feature>
<feature type="binding site" evidence="1">
    <location>
        <position position="362"/>
    </location>
    <ligand>
        <name>UDP-alpha-D-glucose</name>
        <dbReference type="ChEBI" id="CHEBI:58885"/>
    </ligand>
</feature>
<feature type="binding site" evidence="1">
    <location>
        <position position="365"/>
    </location>
    <ligand>
        <name>UDP-alpha-D-glucose</name>
        <dbReference type="ChEBI" id="CHEBI:58885"/>
    </ligand>
</feature>
<feature type="binding site" evidence="1">
    <location>
        <position position="366"/>
    </location>
    <ligand>
        <name>UDP-alpha-D-glucose</name>
        <dbReference type="ChEBI" id="CHEBI:58885"/>
    </ligand>
</feature>
<feature type="binding site" evidence="1">
    <location>
        <position position="367"/>
    </location>
    <ligand>
        <name>UDP-alpha-D-glucose</name>
        <dbReference type="ChEBI" id="CHEBI:58885"/>
    </ligand>
</feature>
<feature type="binding site" evidence="1">
    <location>
        <position position="370"/>
    </location>
    <ligand>
        <name>UDP-alpha-D-glucose</name>
        <dbReference type="ChEBI" id="CHEBI:58885"/>
    </ligand>
</feature>
<feature type="binding site" evidence="2">
    <location>
        <position position="385"/>
    </location>
    <ligand>
        <name>an anthocyanidin</name>
        <dbReference type="ChEBI" id="CHEBI:143576"/>
    </ligand>
</feature>
<feature type="binding site" evidence="1">
    <location>
        <position position="386"/>
    </location>
    <ligand>
        <name>UDP-alpha-D-glucose</name>
        <dbReference type="ChEBI" id="CHEBI:58885"/>
    </ligand>
</feature>
<feature type="binding site" evidence="1">
    <location>
        <position position="387"/>
    </location>
    <ligand>
        <name>UDP-alpha-D-glucose</name>
        <dbReference type="ChEBI" id="CHEBI:58885"/>
    </ligand>
</feature>
<feature type="sequence conflict" description="In Ref. 1; AAU12366 and 2; AAS89832." evidence="6" ref="1 2">
    <original>MAPV</original>
    <variation>MA</variation>
    <location>
        <begin position="1"/>
        <end position="4"/>
    </location>
</feature>
<feature type="sequence conflict" description="In Ref. 2; AAS89832." evidence="6" ref="2">
    <original>A</original>
    <variation>S</variation>
    <location>
        <position position="123"/>
    </location>
</feature>
<feature type="sequence conflict" description="In Ref. 2; AAS89832." evidence="6" ref="2">
    <original>QVLAHGSVGA</original>
    <variation>TGPGAWFSWS</variation>
    <location>
        <begin position="349"/>
        <end position="358"/>
    </location>
</feature>
<proteinExistence type="evidence at protein level"/>
<accession>Q5UL10</accession>
<accession>Q5UL11</accession>
<accession>Q6PVW5</accession>
<reference evidence="6 8" key="1">
    <citation type="journal article" date="2007" name="Arch. Biochem. Biophys.">
        <title>Characterization of major enzymes and genes involved in flavonoid and proanthocyanidin biosynthesis during fruit development in strawberry (Fragaria x ananassa).</title>
        <authorList>
            <person name="Almeida J.R."/>
            <person name="D'Amico E."/>
            <person name="Preuss A."/>
            <person name="Carbone F."/>
            <person name="de Vos C.H."/>
            <person name="Deiml B."/>
            <person name="Mourgues F."/>
            <person name="Perrotta G."/>
            <person name="Fischer T.C."/>
            <person name="Bovy A.G."/>
            <person name="Martens S."/>
            <person name="Rosati C."/>
        </authorList>
    </citation>
    <scope>NUCLEOTIDE SEQUENCE [GENOMIC DNA / MRNA]</scope>
    <scope>FUNCTION</scope>
    <scope>CATALYTIC ACTIVITY</scope>
    <scope>TISSUE SPECIFICITY</scope>
    <scope>DEVELOPMENTAL STAGE</scope>
    <source>
        <strain evidence="4">cv. Queen Elisa</strain>
        <tissue evidence="4">Fruit</tissue>
        <tissue evidence="4">Leaf</tissue>
    </source>
</reference>
<reference evidence="7" key="2">
    <citation type="submission" date="2004-03" db="EMBL/GenBank/DDBJ databases">
        <title>An UDP glucose:flavonoid-3-O-glucosyltransferase gene along strawberry fruit ripening.</title>
        <authorList>
            <person name="Munoz-Blanco J."/>
            <person name="Caballero J.L."/>
            <person name="Moyano E."/>
            <person name="Lopez-Raez J.A."/>
        </authorList>
    </citation>
    <scope>NUCLEOTIDE SEQUENCE [MRNA]</scope>
</reference>
<organism>
    <name type="scientific">Fragaria ananassa</name>
    <name type="common">Strawberry</name>
    <name type="synonym">Fragaria chiloensis x Fragaria virginiana</name>
    <dbReference type="NCBI Taxonomy" id="3747"/>
    <lineage>
        <taxon>Eukaryota</taxon>
        <taxon>Viridiplantae</taxon>
        <taxon>Streptophyta</taxon>
        <taxon>Embryophyta</taxon>
        <taxon>Tracheophyta</taxon>
        <taxon>Spermatophyta</taxon>
        <taxon>Magnoliopsida</taxon>
        <taxon>eudicotyledons</taxon>
        <taxon>Gunneridae</taxon>
        <taxon>Pentapetalae</taxon>
        <taxon>rosids</taxon>
        <taxon>fabids</taxon>
        <taxon>Rosales</taxon>
        <taxon>Rosaceae</taxon>
        <taxon>Rosoideae</taxon>
        <taxon>Potentilleae</taxon>
        <taxon>Fragariinae</taxon>
        <taxon>Fragaria</taxon>
    </lineage>
</organism>
<comment type="function">
    <text evidence="4">In the presence of other necessary color factors, this glycosylation reaction allows the accumulation of anthocyanin pigments (PubMed:17573033). Anthocyanidins are the preferred substrates, while flavonols are only a minor substrate in vitro (PubMed:17573033).</text>
</comment>
<comment type="catalytic activity">
    <reaction evidence="4">
        <text>an anthocyanidin + UDP-alpha-D-glucose + H(+) = an anthocyanidin 3-O-beta-D-glucoside + UDP</text>
        <dbReference type="Rhea" id="RHEA:20093"/>
        <dbReference type="ChEBI" id="CHEBI:15378"/>
        <dbReference type="ChEBI" id="CHEBI:16307"/>
        <dbReference type="ChEBI" id="CHEBI:58223"/>
        <dbReference type="ChEBI" id="CHEBI:58885"/>
        <dbReference type="ChEBI" id="CHEBI:143576"/>
        <dbReference type="EC" id="2.4.1.115"/>
    </reaction>
</comment>
<comment type="catalytic activity">
    <reaction evidence="4">
        <text>pelargonidin + UDP-alpha-D-glucose = pelargonidin 3-O-beta-D-glucoside + UDP</text>
        <dbReference type="Rhea" id="RHEA:61504"/>
        <dbReference type="ChEBI" id="CHEBI:58223"/>
        <dbReference type="ChEBI" id="CHEBI:58885"/>
        <dbReference type="ChEBI" id="CHEBI:144777"/>
        <dbReference type="ChEBI" id="CHEBI:144778"/>
        <dbReference type="EC" id="2.4.1.115"/>
    </reaction>
</comment>
<comment type="catalytic activity">
    <reaction evidence="4">
        <text>cyanidin + UDP-alpha-D-glucose = cyanidin 3-O-beta-D-glucoside + UDP + H(+)</text>
        <dbReference type="Rhea" id="RHEA:60100"/>
        <dbReference type="ChEBI" id="CHEBI:15378"/>
        <dbReference type="ChEBI" id="CHEBI:58223"/>
        <dbReference type="ChEBI" id="CHEBI:58885"/>
        <dbReference type="ChEBI" id="CHEBI:71682"/>
        <dbReference type="ChEBI" id="CHEBI:77857"/>
        <dbReference type="EC" id="2.4.1.115"/>
    </reaction>
</comment>
<comment type="pathway">
    <text evidence="4">Pigment biosynthesis; anthocyanin biosynthesis.</text>
</comment>
<comment type="tissue specificity">
    <text evidence="4">Highest expression detected in fruit, with very low levels detected in petal and leaf.</text>
</comment>
<comment type="developmental stage">
    <text evidence="4">Expression in fruit is ripening-related, with highest expression levels detected in turning stage and red fruit.</text>
</comment>
<comment type="similarity">
    <text evidence="3">Belongs to the UDP-glycosyltransferase family.</text>
</comment>